<keyword id="KW-0067">ATP-binding</keyword>
<keyword id="KW-0315">Glutamine amidotransferase</keyword>
<keyword id="KW-0436">Ligase</keyword>
<keyword id="KW-0460">Magnesium</keyword>
<keyword id="KW-0479">Metal-binding</keyword>
<keyword id="KW-0547">Nucleotide-binding</keyword>
<keyword id="KW-0665">Pyrimidine biosynthesis</keyword>
<keyword id="KW-1185">Reference proteome</keyword>
<name>PYRG_SHEDO</name>
<accession>Q12PZ5</accession>
<reference key="1">
    <citation type="submission" date="2006-03" db="EMBL/GenBank/DDBJ databases">
        <title>Complete sequence of Shewanella denitrificans OS217.</title>
        <authorList>
            <consortium name="US DOE Joint Genome Institute"/>
            <person name="Copeland A."/>
            <person name="Lucas S."/>
            <person name="Lapidus A."/>
            <person name="Barry K."/>
            <person name="Detter J.C."/>
            <person name="Glavina del Rio T."/>
            <person name="Hammon N."/>
            <person name="Israni S."/>
            <person name="Dalin E."/>
            <person name="Tice H."/>
            <person name="Pitluck S."/>
            <person name="Brettin T."/>
            <person name="Bruce D."/>
            <person name="Han C."/>
            <person name="Tapia R."/>
            <person name="Gilna P."/>
            <person name="Kiss H."/>
            <person name="Schmutz J."/>
            <person name="Larimer F."/>
            <person name="Land M."/>
            <person name="Hauser L."/>
            <person name="Kyrpides N."/>
            <person name="Lykidis A."/>
            <person name="Richardson P."/>
        </authorList>
    </citation>
    <scope>NUCLEOTIDE SEQUENCE [LARGE SCALE GENOMIC DNA]</scope>
    <source>
        <strain>OS217 / ATCC BAA-1090 / DSM 15013</strain>
    </source>
</reference>
<gene>
    <name evidence="1" type="primary">pyrG</name>
    <name type="ordered locus">Sden_1195</name>
</gene>
<feature type="chain" id="PRO_0000266212" description="CTP synthase">
    <location>
        <begin position="1"/>
        <end position="545"/>
    </location>
</feature>
<feature type="domain" description="Glutamine amidotransferase type-1" evidence="1">
    <location>
        <begin position="291"/>
        <end position="542"/>
    </location>
</feature>
<feature type="region of interest" description="Amidoligase domain" evidence="1">
    <location>
        <begin position="1"/>
        <end position="266"/>
    </location>
</feature>
<feature type="active site" description="Nucleophile; for glutamine hydrolysis" evidence="1">
    <location>
        <position position="379"/>
    </location>
</feature>
<feature type="active site" evidence="1">
    <location>
        <position position="515"/>
    </location>
</feature>
<feature type="active site" evidence="1">
    <location>
        <position position="517"/>
    </location>
</feature>
<feature type="binding site" evidence="1">
    <location>
        <position position="14"/>
    </location>
    <ligand>
        <name>CTP</name>
        <dbReference type="ChEBI" id="CHEBI:37563"/>
        <note>allosteric inhibitor</note>
    </ligand>
</feature>
<feature type="binding site" evidence="1">
    <location>
        <position position="14"/>
    </location>
    <ligand>
        <name>UTP</name>
        <dbReference type="ChEBI" id="CHEBI:46398"/>
    </ligand>
</feature>
<feature type="binding site" evidence="1">
    <location>
        <begin position="15"/>
        <end position="20"/>
    </location>
    <ligand>
        <name>ATP</name>
        <dbReference type="ChEBI" id="CHEBI:30616"/>
    </ligand>
</feature>
<feature type="binding site" evidence="1">
    <location>
        <position position="72"/>
    </location>
    <ligand>
        <name>ATP</name>
        <dbReference type="ChEBI" id="CHEBI:30616"/>
    </ligand>
</feature>
<feature type="binding site" evidence="1">
    <location>
        <position position="72"/>
    </location>
    <ligand>
        <name>Mg(2+)</name>
        <dbReference type="ChEBI" id="CHEBI:18420"/>
    </ligand>
</feature>
<feature type="binding site" evidence="1">
    <location>
        <position position="140"/>
    </location>
    <ligand>
        <name>Mg(2+)</name>
        <dbReference type="ChEBI" id="CHEBI:18420"/>
    </ligand>
</feature>
<feature type="binding site" evidence="1">
    <location>
        <begin position="147"/>
        <end position="149"/>
    </location>
    <ligand>
        <name>CTP</name>
        <dbReference type="ChEBI" id="CHEBI:37563"/>
        <note>allosteric inhibitor</note>
    </ligand>
</feature>
<feature type="binding site" evidence="1">
    <location>
        <begin position="187"/>
        <end position="192"/>
    </location>
    <ligand>
        <name>CTP</name>
        <dbReference type="ChEBI" id="CHEBI:37563"/>
        <note>allosteric inhibitor</note>
    </ligand>
</feature>
<feature type="binding site" evidence="1">
    <location>
        <begin position="187"/>
        <end position="192"/>
    </location>
    <ligand>
        <name>UTP</name>
        <dbReference type="ChEBI" id="CHEBI:46398"/>
    </ligand>
</feature>
<feature type="binding site" evidence="1">
    <location>
        <position position="223"/>
    </location>
    <ligand>
        <name>CTP</name>
        <dbReference type="ChEBI" id="CHEBI:37563"/>
        <note>allosteric inhibitor</note>
    </ligand>
</feature>
<feature type="binding site" evidence="1">
    <location>
        <position position="223"/>
    </location>
    <ligand>
        <name>UTP</name>
        <dbReference type="ChEBI" id="CHEBI:46398"/>
    </ligand>
</feature>
<feature type="binding site" evidence="1">
    <location>
        <begin position="239"/>
        <end position="241"/>
    </location>
    <ligand>
        <name>ATP</name>
        <dbReference type="ChEBI" id="CHEBI:30616"/>
    </ligand>
</feature>
<feature type="binding site" evidence="1">
    <location>
        <position position="352"/>
    </location>
    <ligand>
        <name>L-glutamine</name>
        <dbReference type="ChEBI" id="CHEBI:58359"/>
    </ligand>
</feature>
<feature type="binding site" evidence="1">
    <location>
        <begin position="380"/>
        <end position="383"/>
    </location>
    <ligand>
        <name>L-glutamine</name>
        <dbReference type="ChEBI" id="CHEBI:58359"/>
    </ligand>
</feature>
<feature type="binding site" evidence="1">
    <location>
        <position position="403"/>
    </location>
    <ligand>
        <name>L-glutamine</name>
        <dbReference type="ChEBI" id="CHEBI:58359"/>
    </ligand>
</feature>
<feature type="binding site" evidence="1">
    <location>
        <position position="470"/>
    </location>
    <ligand>
        <name>L-glutamine</name>
        <dbReference type="ChEBI" id="CHEBI:58359"/>
    </ligand>
</feature>
<proteinExistence type="inferred from homology"/>
<organism>
    <name type="scientific">Shewanella denitrificans (strain OS217 / ATCC BAA-1090 / DSM 15013)</name>
    <dbReference type="NCBI Taxonomy" id="318161"/>
    <lineage>
        <taxon>Bacteria</taxon>
        <taxon>Pseudomonadati</taxon>
        <taxon>Pseudomonadota</taxon>
        <taxon>Gammaproteobacteria</taxon>
        <taxon>Alteromonadales</taxon>
        <taxon>Shewanellaceae</taxon>
        <taxon>Shewanella</taxon>
    </lineage>
</organism>
<evidence type="ECO:0000255" key="1">
    <source>
        <dbReference type="HAMAP-Rule" id="MF_01227"/>
    </source>
</evidence>
<sequence length="545" mass="60060">MTTRYIFVTGGVVSSLGKGIAAASLAAILEARGLNVTIMKLDPYINVDPGTMSPTQHGEVFVTEDGAETDLDLGHYERFIRTKMNRRNNFTTGRIYEEVLRKERRGDYLGATIQVIPHITNAIKERVIAGGEGHDVAIVEIGGTVGDIESLPFLESIRQLGAELGRDRTLFMHLTLVPFLGAAGEIKTKPTQHSVKELRSIGIAPDVLVCRGDRAVPANERAKISLFCNVEERAVISLKDVDSIYKIPALLRSQGLDELVIKRFNIDCKEADLSEWENVIYQEANPNGEVTIGMVGKYIELPDAYKSVNEALKHAGLKNRVTVNIKYIDSQTVEAKGDEVLQGLDGILVPGGFGERGVEGKILAAKFARENKLPYFGICLGMQVALIEFARNVAGMADAHSTEFNPASPFPVVGLITEWIDEDGQLELRHEESDLGGTMRLGAQLCHLKEGTKAAEAYKGNTCVERHRHRYEVNNNYVDRLEKAGLIFSGLSSDRKLVEMIELAEHPWFVAGQFHPEFTSTPRDGHPLFEGFIAASLSHQKRILG</sequence>
<protein>
    <recommendedName>
        <fullName evidence="1">CTP synthase</fullName>
        <ecNumber evidence="1">6.3.4.2</ecNumber>
    </recommendedName>
    <alternativeName>
        <fullName evidence="1">Cytidine 5'-triphosphate synthase</fullName>
    </alternativeName>
    <alternativeName>
        <fullName evidence="1">Cytidine triphosphate synthetase</fullName>
        <shortName evidence="1">CTP synthetase</shortName>
        <shortName evidence="1">CTPS</shortName>
    </alternativeName>
    <alternativeName>
        <fullName evidence="1">UTP--ammonia ligase</fullName>
    </alternativeName>
</protein>
<dbReference type="EC" id="6.3.4.2" evidence="1"/>
<dbReference type="EMBL" id="CP000302">
    <property type="protein sequence ID" value="ABE54481.1"/>
    <property type="molecule type" value="Genomic_DNA"/>
</dbReference>
<dbReference type="RefSeq" id="WP_011495641.1">
    <property type="nucleotide sequence ID" value="NC_007954.1"/>
</dbReference>
<dbReference type="SMR" id="Q12PZ5"/>
<dbReference type="STRING" id="318161.Sden_1195"/>
<dbReference type="MEROPS" id="C26.964"/>
<dbReference type="KEGG" id="sdn:Sden_1195"/>
<dbReference type="eggNOG" id="COG0504">
    <property type="taxonomic scope" value="Bacteria"/>
</dbReference>
<dbReference type="HOGENOM" id="CLU_011675_5_0_6"/>
<dbReference type="OrthoDB" id="9801107at2"/>
<dbReference type="UniPathway" id="UPA00159">
    <property type="reaction ID" value="UER00277"/>
</dbReference>
<dbReference type="Proteomes" id="UP000001982">
    <property type="component" value="Chromosome"/>
</dbReference>
<dbReference type="GO" id="GO:0005829">
    <property type="term" value="C:cytosol"/>
    <property type="evidence" value="ECO:0007669"/>
    <property type="project" value="TreeGrafter"/>
</dbReference>
<dbReference type="GO" id="GO:0005524">
    <property type="term" value="F:ATP binding"/>
    <property type="evidence" value="ECO:0007669"/>
    <property type="project" value="UniProtKB-KW"/>
</dbReference>
<dbReference type="GO" id="GO:0003883">
    <property type="term" value="F:CTP synthase activity"/>
    <property type="evidence" value="ECO:0007669"/>
    <property type="project" value="UniProtKB-UniRule"/>
</dbReference>
<dbReference type="GO" id="GO:0004359">
    <property type="term" value="F:glutaminase activity"/>
    <property type="evidence" value="ECO:0007669"/>
    <property type="project" value="RHEA"/>
</dbReference>
<dbReference type="GO" id="GO:0042802">
    <property type="term" value="F:identical protein binding"/>
    <property type="evidence" value="ECO:0007669"/>
    <property type="project" value="TreeGrafter"/>
</dbReference>
<dbReference type="GO" id="GO:0046872">
    <property type="term" value="F:metal ion binding"/>
    <property type="evidence" value="ECO:0007669"/>
    <property type="project" value="UniProtKB-KW"/>
</dbReference>
<dbReference type="GO" id="GO:0044210">
    <property type="term" value="P:'de novo' CTP biosynthetic process"/>
    <property type="evidence" value="ECO:0007669"/>
    <property type="project" value="UniProtKB-UniRule"/>
</dbReference>
<dbReference type="GO" id="GO:0019856">
    <property type="term" value="P:pyrimidine nucleobase biosynthetic process"/>
    <property type="evidence" value="ECO:0007669"/>
    <property type="project" value="TreeGrafter"/>
</dbReference>
<dbReference type="CDD" id="cd03113">
    <property type="entry name" value="CTPS_N"/>
    <property type="match status" value="1"/>
</dbReference>
<dbReference type="CDD" id="cd01746">
    <property type="entry name" value="GATase1_CTP_Synthase"/>
    <property type="match status" value="1"/>
</dbReference>
<dbReference type="FunFam" id="3.40.50.300:FF:000009">
    <property type="entry name" value="CTP synthase"/>
    <property type="match status" value="1"/>
</dbReference>
<dbReference type="FunFam" id="3.40.50.880:FF:000002">
    <property type="entry name" value="CTP synthase"/>
    <property type="match status" value="1"/>
</dbReference>
<dbReference type="Gene3D" id="3.40.50.880">
    <property type="match status" value="1"/>
</dbReference>
<dbReference type="Gene3D" id="3.40.50.300">
    <property type="entry name" value="P-loop containing nucleotide triphosphate hydrolases"/>
    <property type="match status" value="1"/>
</dbReference>
<dbReference type="HAMAP" id="MF_01227">
    <property type="entry name" value="PyrG"/>
    <property type="match status" value="1"/>
</dbReference>
<dbReference type="InterPro" id="IPR029062">
    <property type="entry name" value="Class_I_gatase-like"/>
</dbReference>
<dbReference type="InterPro" id="IPR004468">
    <property type="entry name" value="CTP_synthase"/>
</dbReference>
<dbReference type="InterPro" id="IPR017456">
    <property type="entry name" value="CTP_synthase_N"/>
</dbReference>
<dbReference type="InterPro" id="IPR017926">
    <property type="entry name" value="GATASE"/>
</dbReference>
<dbReference type="InterPro" id="IPR033828">
    <property type="entry name" value="GATase1_CTP_Synthase"/>
</dbReference>
<dbReference type="InterPro" id="IPR027417">
    <property type="entry name" value="P-loop_NTPase"/>
</dbReference>
<dbReference type="NCBIfam" id="NF003792">
    <property type="entry name" value="PRK05380.1"/>
    <property type="match status" value="1"/>
</dbReference>
<dbReference type="NCBIfam" id="TIGR00337">
    <property type="entry name" value="PyrG"/>
    <property type="match status" value="1"/>
</dbReference>
<dbReference type="PANTHER" id="PTHR11550">
    <property type="entry name" value="CTP SYNTHASE"/>
    <property type="match status" value="1"/>
</dbReference>
<dbReference type="PANTHER" id="PTHR11550:SF0">
    <property type="entry name" value="CTP SYNTHASE-RELATED"/>
    <property type="match status" value="1"/>
</dbReference>
<dbReference type="Pfam" id="PF06418">
    <property type="entry name" value="CTP_synth_N"/>
    <property type="match status" value="1"/>
</dbReference>
<dbReference type="Pfam" id="PF00117">
    <property type="entry name" value="GATase"/>
    <property type="match status" value="1"/>
</dbReference>
<dbReference type="SUPFAM" id="SSF52317">
    <property type="entry name" value="Class I glutamine amidotransferase-like"/>
    <property type="match status" value="1"/>
</dbReference>
<dbReference type="SUPFAM" id="SSF52540">
    <property type="entry name" value="P-loop containing nucleoside triphosphate hydrolases"/>
    <property type="match status" value="1"/>
</dbReference>
<dbReference type="PROSITE" id="PS51273">
    <property type="entry name" value="GATASE_TYPE_1"/>
    <property type="match status" value="1"/>
</dbReference>
<comment type="function">
    <text evidence="1">Catalyzes the ATP-dependent amination of UTP to CTP with either L-glutamine or ammonia as the source of nitrogen. Regulates intracellular CTP levels through interactions with the four ribonucleotide triphosphates.</text>
</comment>
<comment type="catalytic activity">
    <reaction evidence="1">
        <text>UTP + L-glutamine + ATP + H2O = CTP + L-glutamate + ADP + phosphate + 2 H(+)</text>
        <dbReference type="Rhea" id="RHEA:26426"/>
        <dbReference type="ChEBI" id="CHEBI:15377"/>
        <dbReference type="ChEBI" id="CHEBI:15378"/>
        <dbReference type="ChEBI" id="CHEBI:29985"/>
        <dbReference type="ChEBI" id="CHEBI:30616"/>
        <dbReference type="ChEBI" id="CHEBI:37563"/>
        <dbReference type="ChEBI" id="CHEBI:43474"/>
        <dbReference type="ChEBI" id="CHEBI:46398"/>
        <dbReference type="ChEBI" id="CHEBI:58359"/>
        <dbReference type="ChEBI" id="CHEBI:456216"/>
        <dbReference type="EC" id="6.3.4.2"/>
    </reaction>
</comment>
<comment type="catalytic activity">
    <reaction evidence="1">
        <text>L-glutamine + H2O = L-glutamate + NH4(+)</text>
        <dbReference type="Rhea" id="RHEA:15889"/>
        <dbReference type="ChEBI" id="CHEBI:15377"/>
        <dbReference type="ChEBI" id="CHEBI:28938"/>
        <dbReference type="ChEBI" id="CHEBI:29985"/>
        <dbReference type="ChEBI" id="CHEBI:58359"/>
    </reaction>
</comment>
<comment type="catalytic activity">
    <reaction evidence="1">
        <text>UTP + NH4(+) + ATP = CTP + ADP + phosphate + 2 H(+)</text>
        <dbReference type="Rhea" id="RHEA:16597"/>
        <dbReference type="ChEBI" id="CHEBI:15378"/>
        <dbReference type="ChEBI" id="CHEBI:28938"/>
        <dbReference type="ChEBI" id="CHEBI:30616"/>
        <dbReference type="ChEBI" id="CHEBI:37563"/>
        <dbReference type="ChEBI" id="CHEBI:43474"/>
        <dbReference type="ChEBI" id="CHEBI:46398"/>
        <dbReference type="ChEBI" id="CHEBI:456216"/>
    </reaction>
</comment>
<comment type="activity regulation">
    <text evidence="1">Allosterically activated by GTP, when glutamine is the substrate; GTP has no effect on the reaction when ammonia is the substrate. The allosteric effector GTP functions by stabilizing the protein conformation that binds the tetrahedral intermediate(s) formed during glutamine hydrolysis. Inhibited by the product CTP, via allosteric rather than competitive inhibition.</text>
</comment>
<comment type="pathway">
    <text evidence="1">Pyrimidine metabolism; CTP biosynthesis via de novo pathway; CTP from UDP: step 2/2.</text>
</comment>
<comment type="subunit">
    <text evidence="1">Homotetramer.</text>
</comment>
<comment type="miscellaneous">
    <text evidence="1">CTPSs have evolved a hybrid strategy for distinguishing between UTP and CTP. The overlapping regions of the product feedback inhibitory and substrate sites recognize a common feature in both compounds, the triphosphate moiety. To differentiate isosteric substrate and product pyrimidine rings, an additional pocket far from the expected kinase/ligase catalytic site, specifically recognizes the cytosine and ribose portions of the product inhibitor.</text>
</comment>
<comment type="similarity">
    <text evidence="1">Belongs to the CTP synthase family.</text>
</comment>